<dbReference type="EMBL" id="D16109">
    <property type="protein sequence ID" value="BAA03683.1"/>
    <property type="molecule type" value="mRNA"/>
</dbReference>
<dbReference type="PIR" id="A53210">
    <property type="entry name" value="A53210"/>
</dbReference>
<dbReference type="RefSeq" id="NP_778221.1">
    <property type="nucleotide sequence ID" value="NM_175051.1"/>
</dbReference>
<dbReference type="SMR" id="P49259"/>
<dbReference type="FunCoup" id="P49259">
    <property type="interactions" value="314"/>
</dbReference>
<dbReference type="STRING" id="9913.ENSBTAP00000063415"/>
<dbReference type="GlyCosmos" id="P49259">
    <property type="glycosylation" value="3 sites, No reported glycans"/>
</dbReference>
<dbReference type="GlyGen" id="P49259">
    <property type="glycosylation" value="3 sites"/>
</dbReference>
<dbReference type="PaxDb" id="9913-ENSBTAP00000043437"/>
<dbReference type="GeneID" id="317777"/>
<dbReference type="KEGG" id="bta:317777"/>
<dbReference type="CTD" id="22925"/>
<dbReference type="VEuPathDB" id="HostDB:ENSBTAG00000032515"/>
<dbReference type="eggNOG" id="KOG4297">
    <property type="taxonomic scope" value="Eukaryota"/>
</dbReference>
<dbReference type="HOGENOM" id="CLU_002069_2_0_1"/>
<dbReference type="InParanoid" id="P49259"/>
<dbReference type="OrthoDB" id="5858677at2759"/>
<dbReference type="TreeFam" id="TF316663"/>
<dbReference type="Reactome" id="R-BTA-1482788">
    <property type="pathway name" value="Acyl chain remodelling of PC"/>
</dbReference>
<dbReference type="Reactome" id="R-BTA-1482801">
    <property type="pathway name" value="Acyl chain remodelling of PS"/>
</dbReference>
<dbReference type="Reactome" id="R-BTA-1482839">
    <property type="pathway name" value="Acyl chain remodelling of PE"/>
</dbReference>
<dbReference type="Reactome" id="R-BTA-1482922">
    <property type="pathway name" value="Acyl chain remodelling of PI"/>
</dbReference>
<dbReference type="Reactome" id="R-BTA-1482925">
    <property type="pathway name" value="Acyl chain remodelling of PG"/>
</dbReference>
<dbReference type="Reactome" id="R-BTA-1483166">
    <property type="pathway name" value="Synthesis of PA"/>
</dbReference>
<dbReference type="Proteomes" id="UP000009136">
    <property type="component" value="Chromosome 2"/>
</dbReference>
<dbReference type="Bgee" id="ENSBTAG00000032515">
    <property type="expression patterns" value="Expressed in omental fat pad and 97 other cell types or tissues"/>
</dbReference>
<dbReference type="GO" id="GO:0005576">
    <property type="term" value="C:extracellular region"/>
    <property type="evidence" value="ECO:0007669"/>
    <property type="project" value="UniProtKB-SubCell"/>
</dbReference>
<dbReference type="GO" id="GO:0005886">
    <property type="term" value="C:plasma membrane"/>
    <property type="evidence" value="ECO:0000250"/>
    <property type="project" value="UniProtKB"/>
</dbReference>
<dbReference type="GO" id="GO:0043235">
    <property type="term" value="C:receptor complex"/>
    <property type="evidence" value="ECO:0000318"/>
    <property type="project" value="GO_Central"/>
</dbReference>
<dbReference type="GO" id="GO:0030246">
    <property type="term" value="F:carbohydrate binding"/>
    <property type="evidence" value="ECO:0007669"/>
    <property type="project" value="UniProtKB-KW"/>
</dbReference>
<dbReference type="GO" id="GO:0043274">
    <property type="term" value="F:phospholipase binding"/>
    <property type="evidence" value="ECO:0000250"/>
    <property type="project" value="UniProtKB"/>
</dbReference>
<dbReference type="GO" id="GO:0038023">
    <property type="term" value="F:signaling receptor activity"/>
    <property type="evidence" value="ECO:0000250"/>
    <property type="project" value="UniProtKB"/>
</dbReference>
<dbReference type="GO" id="GO:0090403">
    <property type="term" value="P:oxidative stress-induced premature senescence"/>
    <property type="evidence" value="ECO:0000250"/>
    <property type="project" value="UniProtKB"/>
</dbReference>
<dbReference type="GO" id="GO:0090238">
    <property type="term" value="P:positive regulation of arachidonate secretion"/>
    <property type="evidence" value="ECO:0000250"/>
    <property type="project" value="UniProtKB"/>
</dbReference>
<dbReference type="GO" id="GO:0001819">
    <property type="term" value="P:positive regulation of cytokine production"/>
    <property type="evidence" value="ECO:0000250"/>
    <property type="project" value="UniProtKB"/>
</dbReference>
<dbReference type="GO" id="GO:0043517">
    <property type="term" value="P:positive regulation of DNA damage response, signal transduction by p53 class mediator"/>
    <property type="evidence" value="ECO:0000250"/>
    <property type="project" value="UniProtKB"/>
</dbReference>
<dbReference type="GO" id="GO:0072593">
    <property type="term" value="P:reactive oxygen species metabolic process"/>
    <property type="evidence" value="ECO:0000250"/>
    <property type="project" value="UniProtKB"/>
</dbReference>
<dbReference type="GO" id="GO:0006898">
    <property type="term" value="P:receptor-mediated endocytosis"/>
    <property type="evidence" value="ECO:0000250"/>
    <property type="project" value="UniProtKB"/>
</dbReference>
<dbReference type="GO" id="GO:0090399">
    <property type="term" value="P:replicative senescence"/>
    <property type="evidence" value="ECO:0000250"/>
    <property type="project" value="UniProtKB"/>
</dbReference>
<dbReference type="CDD" id="cd00037">
    <property type="entry name" value="CLECT"/>
    <property type="match status" value="8"/>
</dbReference>
<dbReference type="CDD" id="cd00062">
    <property type="entry name" value="FN2"/>
    <property type="match status" value="1"/>
</dbReference>
<dbReference type="FunFam" id="2.10.10.10:FF:000001">
    <property type="entry name" value="Fibronectin 1a isoform 1"/>
    <property type="match status" value="1"/>
</dbReference>
<dbReference type="FunFam" id="2.80.10.50:FF:000039">
    <property type="entry name" value="Secretory phospholipase A2 receptor"/>
    <property type="match status" value="1"/>
</dbReference>
<dbReference type="FunFam" id="3.10.100.10:FF:000032">
    <property type="entry name" value="Secretory phospholipase A2 receptor"/>
    <property type="match status" value="1"/>
</dbReference>
<dbReference type="FunFam" id="3.10.100.10:FF:000038">
    <property type="entry name" value="Secretory phospholipase A2 receptor"/>
    <property type="match status" value="1"/>
</dbReference>
<dbReference type="FunFam" id="3.10.100.10:FF:000039">
    <property type="entry name" value="Secretory phospholipase A2 receptor"/>
    <property type="match status" value="1"/>
</dbReference>
<dbReference type="FunFam" id="3.10.100.10:FF:000040">
    <property type="entry name" value="Secretory phospholipase A2 receptor"/>
    <property type="match status" value="1"/>
</dbReference>
<dbReference type="FunFam" id="3.10.100.10:FF:000046">
    <property type="entry name" value="Secretory phospholipase A2 receptor"/>
    <property type="match status" value="1"/>
</dbReference>
<dbReference type="FunFam" id="3.10.100.10:FF:000050">
    <property type="entry name" value="Secretory phospholipase A2 receptor"/>
    <property type="match status" value="1"/>
</dbReference>
<dbReference type="FunFam" id="3.10.100.10:FF:000034">
    <property type="entry name" value="secretory phospholipase A2 receptor"/>
    <property type="match status" value="1"/>
</dbReference>
<dbReference type="FunFam" id="3.10.100.10:FF:000042">
    <property type="entry name" value="secretory phospholipase A2 receptor"/>
    <property type="match status" value="1"/>
</dbReference>
<dbReference type="Gene3D" id="2.80.10.50">
    <property type="match status" value="1"/>
</dbReference>
<dbReference type="Gene3D" id="2.10.10.10">
    <property type="entry name" value="Fibronectin, type II, collagen-binding"/>
    <property type="match status" value="1"/>
</dbReference>
<dbReference type="Gene3D" id="3.10.100.10">
    <property type="entry name" value="Mannose-Binding Protein A, subunit A"/>
    <property type="match status" value="8"/>
</dbReference>
<dbReference type="InterPro" id="IPR001304">
    <property type="entry name" value="C-type_lectin-like"/>
</dbReference>
<dbReference type="InterPro" id="IPR016186">
    <property type="entry name" value="C-type_lectin-like/link_sf"/>
</dbReference>
<dbReference type="InterPro" id="IPR050111">
    <property type="entry name" value="C-type_lectin/snaclec_domain"/>
</dbReference>
<dbReference type="InterPro" id="IPR018378">
    <property type="entry name" value="C-type_lectin_CS"/>
</dbReference>
<dbReference type="InterPro" id="IPR016187">
    <property type="entry name" value="CTDL_fold"/>
</dbReference>
<dbReference type="InterPro" id="IPR000562">
    <property type="entry name" value="FN_type2_dom"/>
</dbReference>
<dbReference type="InterPro" id="IPR036943">
    <property type="entry name" value="FN_type2_sf"/>
</dbReference>
<dbReference type="InterPro" id="IPR035992">
    <property type="entry name" value="Ricin_B-like_lectins"/>
</dbReference>
<dbReference type="InterPro" id="IPR000772">
    <property type="entry name" value="Ricin_B_lectin"/>
</dbReference>
<dbReference type="PANTHER" id="PTHR22803">
    <property type="entry name" value="MANNOSE, PHOSPHOLIPASE, LECTIN RECEPTOR RELATED"/>
    <property type="match status" value="1"/>
</dbReference>
<dbReference type="Pfam" id="PF24562">
    <property type="entry name" value="CysR_MRC2_N"/>
    <property type="match status" value="1"/>
</dbReference>
<dbReference type="Pfam" id="PF00040">
    <property type="entry name" value="fn2"/>
    <property type="match status" value="1"/>
</dbReference>
<dbReference type="Pfam" id="PF00059">
    <property type="entry name" value="Lectin_C"/>
    <property type="match status" value="8"/>
</dbReference>
<dbReference type="PRINTS" id="PR00013">
    <property type="entry name" value="FNTYPEII"/>
</dbReference>
<dbReference type="SMART" id="SM00034">
    <property type="entry name" value="CLECT"/>
    <property type="match status" value="8"/>
</dbReference>
<dbReference type="SMART" id="SM00059">
    <property type="entry name" value="FN2"/>
    <property type="match status" value="1"/>
</dbReference>
<dbReference type="SMART" id="SM00458">
    <property type="entry name" value="RICIN"/>
    <property type="match status" value="1"/>
</dbReference>
<dbReference type="SUPFAM" id="SSF56436">
    <property type="entry name" value="C-type lectin-like"/>
    <property type="match status" value="8"/>
</dbReference>
<dbReference type="SUPFAM" id="SSF50370">
    <property type="entry name" value="Ricin B-like lectins"/>
    <property type="match status" value="1"/>
</dbReference>
<dbReference type="PROSITE" id="PS00615">
    <property type="entry name" value="C_TYPE_LECTIN_1"/>
    <property type="match status" value="3"/>
</dbReference>
<dbReference type="PROSITE" id="PS50041">
    <property type="entry name" value="C_TYPE_LECTIN_2"/>
    <property type="match status" value="8"/>
</dbReference>
<dbReference type="PROSITE" id="PS00023">
    <property type="entry name" value="FN2_1"/>
    <property type="match status" value="1"/>
</dbReference>
<dbReference type="PROSITE" id="PS51092">
    <property type="entry name" value="FN2_2"/>
    <property type="match status" value="1"/>
</dbReference>
<dbReference type="PROSITE" id="PS50231">
    <property type="entry name" value="RICIN_B_LECTIN"/>
    <property type="match status" value="1"/>
</dbReference>
<organism>
    <name type="scientific">Bos taurus</name>
    <name type="common">Bovine</name>
    <dbReference type="NCBI Taxonomy" id="9913"/>
    <lineage>
        <taxon>Eukaryota</taxon>
        <taxon>Metazoa</taxon>
        <taxon>Chordata</taxon>
        <taxon>Craniata</taxon>
        <taxon>Vertebrata</taxon>
        <taxon>Euteleostomi</taxon>
        <taxon>Mammalia</taxon>
        <taxon>Eutheria</taxon>
        <taxon>Laurasiatheria</taxon>
        <taxon>Artiodactyla</taxon>
        <taxon>Ruminantia</taxon>
        <taxon>Pecora</taxon>
        <taxon>Bovidae</taxon>
        <taxon>Bovinae</taxon>
        <taxon>Bos</taxon>
    </lineage>
</organism>
<gene>
    <name type="primary">PLA2R1</name>
</gene>
<reference key="1">
    <citation type="journal article" date="1994" name="J. Biol. Chem.">
        <title>Molecular cloning of pancreatic group I phospholipase A2 receptor.</title>
        <authorList>
            <person name="Ishizaki J."/>
            <person name="Hanasaki K."/>
            <person name="Higashino K."/>
            <person name="Kishino J."/>
            <person name="Kikuchi N."/>
            <person name="Ohara O."/>
            <person name="Arita H."/>
        </authorList>
    </citation>
    <scope>NUCLEOTIDE SEQUENCE [MRNA]</scope>
    <scope>PROTEIN SEQUENCE OF N-TERMINUS</scope>
</reference>
<reference key="2">
    <citation type="journal article" date="1995" name="Biochem. Biophys. Res. Commun.">
        <title>Glycosylation-dependent binding of pancreatic type I phospholipase A2 to its specific receptor.</title>
        <authorList>
            <person name="Fujita H."/>
            <person name="Kawamoto K."/>
            <person name="Hanasaki K."/>
            <person name="Arita H."/>
        </authorList>
    </citation>
    <scope>FUNCTION</scope>
</reference>
<feature type="signal peptide" evidence="8">
    <location>
        <begin position="1"/>
        <end position="20"/>
    </location>
</feature>
<feature type="chain" id="PRO_0000017550" description="Secretory phospholipase A2 receptor">
    <location>
        <begin position="21"/>
        <end position="1463"/>
    </location>
</feature>
<feature type="chain" id="PRO_0000311249" description="Soluble secretory phospholipase A2 receptor" evidence="1">
    <location>
        <begin position="21"/>
        <end status="unknown"/>
    </location>
</feature>
<feature type="topological domain" description="Extracellular" evidence="4">
    <location>
        <begin position="21"/>
        <end position="1392"/>
    </location>
</feature>
<feature type="transmembrane region" description="Helical" evidence="4">
    <location>
        <begin position="1393"/>
        <end position="1421"/>
    </location>
</feature>
<feature type="topological domain" description="Cytoplasmic" evidence="4">
    <location>
        <begin position="1422"/>
        <end position="1463"/>
    </location>
</feature>
<feature type="domain" description="Ricin B-type lectin" evidence="6">
    <location>
        <begin position="38"/>
        <end position="115"/>
    </location>
</feature>
<feature type="domain" description="Fibronectin type-II" evidence="7">
    <location>
        <begin position="173"/>
        <end position="221"/>
    </location>
</feature>
<feature type="domain" description="C-type lectin 1" evidence="5">
    <location>
        <begin position="229"/>
        <end position="353"/>
    </location>
</feature>
<feature type="domain" description="C-type lectin 2" evidence="5">
    <location>
        <begin position="357"/>
        <end position="500"/>
    </location>
</feature>
<feature type="domain" description="C-type lectin 3" evidence="5">
    <location>
        <begin position="504"/>
        <end position="641"/>
    </location>
</feature>
<feature type="domain" description="C-type lectin 4" evidence="5">
    <location>
        <begin position="646"/>
        <end position="795"/>
    </location>
</feature>
<feature type="domain" description="C-type lectin 5" evidence="5">
    <location>
        <begin position="799"/>
        <end position="937"/>
    </location>
</feature>
<feature type="domain" description="C-type lectin 6" evidence="5">
    <location>
        <begin position="941"/>
        <end position="1095"/>
    </location>
</feature>
<feature type="domain" description="C-type lectin 7" evidence="5">
    <location>
        <begin position="1099"/>
        <end position="1230"/>
    </location>
</feature>
<feature type="domain" description="C-type lectin 8" evidence="5">
    <location>
        <begin position="1235"/>
        <end position="1376"/>
    </location>
</feature>
<feature type="short sequence motif" description="Endocytosis signal">
    <location>
        <begin position="1436"/>
        <end position="1442"/>
    </location>
</feature>
<feature type="glycosylation site" description="N-linked (GlcNAc...) asparagine" evidence="4">
    <location>
        <position position="93"/>
    </location>
</feature>
<feature type="glycosylation site" description="N-linked (GlcNAc...) asparagine" evidence="4">
    <location>
        <position position="454"/>
    </location>
</feature>
<feature type="glycosylation site" description="N-linked (GlcNAc...) asparagine" evidence="4">
    <location>
        <position position="1057"/>
    </location>
</feature>
<feature type="disulfide bond" evidence="1">
    <location>
        <begin position="178"/>
        <end position="204"/>
    </location>
</feature>
<feature type="disulfide bond" evidence="1">
    <location>
        <begin position="192"/>
        <end position="219"/>
    </location>
</feature>
<feature type="disulfide bond" evidence="1">
    <location>
        <begin position="260"/>
        <end position="354"/>
    </location>
</feature>
<feature type="disulfide bond" evidence="1">
    <location>
        <begin position="330"/>
        <end position="346"/>
    </location>
</feature>
<feature type="disulfide bond" evidence="1">
    <location>
        <begin position="406"/>
        <end position="501"/>
    </location>
</feature>
<feature type="disulfide bond" evidence="1">
    <location>
        <begin position="478"/>
        <end position="493"/>
    </location>
</feature>
<feature type="disulfide bond" evidence="1">
    <location>
        <begin position="617"/>
        <end position="634"/>
    </location>
</feature>
<feature type="disulfide bond" evidence="1">
    <location>
        <begin position="699"/>
        <end position="796"/>
    </location>
</feature>
<feature type="disulfide bond" evidence="1">
    <location>
        <begin position="774"/>
        <end position="788"/>
    </location>
</feature>
<feature type="disulfide bond" evidence="1">
    <location>
        <begin position="840"/>
        <end position="938"/>
    </location>
</feature>
<feature type="disulfide bond" evidence="1">
    <location>
        <begin position="915"/>
        <end position="930"/>
    </location>
</feature>
<feature type="disulfide bond" evidence="1">
    <location>
        <begin position="992"/>
        <end position="1096"/>
    </location>
</feature>
<feature type="disulfide bond" evidence="1">
    <location>
        <begin position="1068"/>
        <end position="1088"/>
    </location>
</feature>
<feature type="disulfide bond" evidence="1">
    <location>
        <begin position="1209"/>
        <end position="1223"/>
    </location>
</feature>
<feature type="disulfide bond" evidence="1">
    <location>
        <begin position="1280"/>
        <end position="1377"/>
    </location>
</feature>
<feature type="disulfide bond" evidence="1">
    <location>
        <begin position="1354"/>
        <end position="1369"/>
    </location>
</feature>
<evidence type="ECO:0000250" key="1"/>
<evidence type="ECO:0000250" key="2">
    <source>
        <dbReference type="UniProtKB" id="Q13018"/>
    </source>
</evidence>
<evidence type="ECO:0000250" key="3">
    <source>
        <dbReference type="UniProtKB" id="Q62028"/>
    </source>
</evidence>
<evidence type="ECO:0000255" key="4"/>
<evidence type="ECO:0000255" key="5">
    <source>
        <dbReference type="PROSITE-ProRule" id="PRU00040"/>
    </source>
</evidence>
<evidence type="ECO:0000255" key="6">
    <source>
        <dbReference type="PROSITE-ProRule" id="PRU00174"/>
    </source>
</evidence>
<evidence type="ECO:0000255" key="7">
    <source>
        <dbReference type="PROSITE-ProRule" id="PRU00479"/>
    </source>
</evidence>
<evidence type="ECO:0000269" key="8">
    <source>
    </source>
</evidence>
<evidence type="ECO:0000269" key="9">
    <source>
    </source>
</evidence>
<proteinExistence type="evidence at protein level"/>
<name>PLA2R_BOVIN</name>
<accession>P49259</accession>
<protein>
    <recommendedName>
        <fullName>Secretory phospholipase A2 receptor</fullName>
        <shortName>PLA2-R</shortName>
        <shortName>PLA2R</shortName>
    </recommendedName>
    <alternativeName>
        <fullName>180 kDa secretory phospholipase A2 receptor</fullName>
    </alternativeName>
    <alternativeName>
        <fullName>M-type receptor</fullName>
    </alternativeName>
    <component>
        <recommendedName>
            <fullName>Soluble secretory phospholipase A2 receptor</fullName>
            <shortName>Soluble PLA2-R</shortName>
            <shortName>Soluble PLA2R</shortName>
        </recommendedName>
    </component>
</protein>
<keyword id="KW-1003">Cell membrane</keyword>
<keyword id="KW-0903">Direct protein sequencing</keyword>
<keyword id="KW-1015">Disulfide bond</keyword>
<keyword id="KW-0254">Endocytosis</keyword>
<keyword id="KW-0325">Glycoprotein</keyword>
<keyword id="KW-0430">Lectin</keyword>
<keyword id="KW-0472">Membrane</keyword>
<keyword id="KW-0675">Receptor</keyword>
<keyword id="KW-1185">Reference proteome</keyword>
<keyword id="KW-0677">Repeat</keyword>
<keyword id="KW-0964">Secreted</keyword>
<keyword id="KW-0732">Signal</keyword>
<keyword id="KW-0812">Transmembrane</keyword>
<keyword id="KW-1133">Transmembrane helix</keyword>
<sequence length="1463" mass="168651">MPLLSLSLLLLLLQVPAGSAETAAWAVTPERLREWQDKGIFIIQSENLEKCIQASKSTLTLENCKPPNKYMLWKWVSNHRLFNIGGSGCLGLNVSSPEQPLSIYECDSTHVSLKWHCNKKTITGPLQYLVQVKQDNTLVASRKYLHKWVSYMSGGGGICDYLHKDLYTIKGNAHGTPCMFPFQYNQQWHHECTREGREDNLLWCATTSRYERDEKWGFCPDPTSTEVGCDAVWEKDLHSRICYQFNLLSSLSWSEAHSSCQMQGAALLSIADETEENFVRKHLGSEAVEVWMGLNQLDEDAGWQWSDRTPLNYLNWKPEINFEPFVEYHCGTFNAFMPKAWKSRDCESTLPYVCKKYLNPTDHGVVEKDAWKYYATHCEPGWNPHNRNCYKLQKEKKTWNEALQSCQSNNSVLTDITSLAEVEFLVTLLGDENASETWIGLSSHKIPVSFEWSNGSSVTFTNWHTLEPHIFPNRSQLCVSAEQSEGHWKVKNCEETLFYLCKKTGLVLSDTESGCQKGWERHGKFCYKIDTVLRSFDHASSGYYCPPALITITSRFEQAFITSLISSVVKTKDTYFWIALQDQNNTGEYTWKTAGQQLEPVKYTHWNTRQPRYSGGCVVMRGRSHPGRWEVRDCRHFKAMSLCKQPVENREKTKQEEGWPFHPCYLDWESEPGLASCFKVFHSEKVLMKRTWRQAEEFCEEFGAHLASFAHIEEENFVNELLHSKFNRTEERQFWIGFNKRNPLNAGSWEWSDGTPVVSSFLDNSYFGEDARNCAVYKANKTLLPSYCGSKREWICKIPRDVRPKVPPWYQYDAPWLFYQDAEYLFHISASEWSSFEFVCGWLRSDILTIHSAHEQEFIHSKIRALSKYGVNWWIGLREERASDEFRWRDGSPVIYQNWDKGKERSMGLNESQRCGFISSITGLWASEECSISMPSICKRKKVWVIEKKKDIPKQHGTCPKGWLYFDYKCLLLKIPEGPSDWKNWTSAQDFCVEEGGTLVAIENEVEQAFITMNLFGHTTNVWIGLQDDDYEKWLNGRPVSYSNWSPFDTKNIPNHNTTEVQKRIPLCGLLSNNPNFHFTGKWYFEDCREGYGFVCEKMQDASGHSINTSDMYPIPNTLEYGNRTYKIINANMTWYTALKTCLMHGAELASITDQYHQSFLTVILNRVGYAHWIGLFTEDNGLSFDWSDGTKSSFTFWKDDESSFLGDCVFADTSGRWSSTACESYLQGAICQVPTETRLSGRLELCSETSIPWIKFKSNCYSFSTVLESTSFEAAHEFCKKKGSNLLTIKDEAENSFLLEELLAFRSSVQMIWLNAQFDGDNETIKWFDGTPTDQSNWGIRKPEVYHFKPHLCVALRIPEGVWQLSSCQDKKGFICKMEADIHTVKKHPGKGPSHSVIPLTVALTLLVILAISTLSFCMYKHSHIIFGRLAQFRNPYYPSANFSTVHLEENILISDLEKNDQ</sequence>
<comment type="function">
    <text evidence="9">Receptor for secretory phospholipase A2 (sPLA2). Also able to bind to snake PA2-like toxins. Although its precise function remains unclear, binding of sPLA2 to its receptor participates in both positive and negative regulation of sPLA2 functions as well as clearance of sPLA2. Binding of sPLA2-IB/PLA2G1B induces various effects depending on the cell type, such as activation of the mitogen-activated protein kinase (MAPK) cascade to induce cell proliferation, the production of lipid mediators, selective release of arachidonic acid in bone marrow-derived mast cells. In neutrophils, binding of sPLA2-IB/PLA2G1B can activate p38 MAPK to stimulate elastase release and cell adhesion. May be involved in responses in pro-inflammatory cytokine productions during endotoxic shock. Also has endocytic properties and rapidly internalizes sPLA2 ligands, which is particularly important for the clearance of extracellular sPLA2s to protect their potent enzymatic activities. The soluble secretory phospholipase A2 receptor form is circulating and acts as a negative regulator of sPLA2 functions by blocking the biological functions of sPLA2-IB/PLA2G1B and sPLA2-X/PLA2G10.</text>
</comment>
<comment type="subunit">
    <text evidence="2 3">Interacts with sPLA2-IB/PLA2G1B; this interaction mediates intracellular signaling as well as clearance of extracellular sPLA2-IB/PLA2G1B via endocytotic pathway (By similarity). Interacts with sPLA2-X/PLA2G10; this interaction mediates sPLA2-X/PLA2G10 clearance and inactivation (By similarity).</text>
</comment>
<comment type="subcellular location">
    <subcellularLocation>
        <location evidence="1">Cell membrane</location>
        <topology evidence="1">Single-pass type I membrane protein</topology>
    </subcellularLocation>
</comment>
<comment type="subcellular location">
    <molecule>Soluble secretory phospholipase A2 receptor</molecule>
    <subcellularLocation>
        <location evidence="1">Secreted</location>
    </subcellularLocation>
</comment>
<comment type="domain">
    <text evidence="1">C-type lectin domains 3-5 mediate the interaction with phospholipase PLA2G1B.</text>
</comment>
<comment type="domain">
    <text evidence="1">The endocytosis signal probably mediates endocytosis via clathrin-coated pits.</text>
</comment>
<comment type="PTM">
    <text evidence="1">The secretory phospholipase A2 receptor form may be produced by the action of metalloproteinases. It contains all extracellular domains and only lacks transmembrane and cytosolic regions. It is however unclear whether this form is produced by proteolytic cleavage as suggested by some experiments, or by alternative splicing (By similarity).</text>
</comment>